<keyword id="KW-0028">Amino-acid biosynthesis</keyword>
<keyword id="KW-0057">Aromatic amino acid biosynthesis</keyword>
<keyword id="KW-0456">Lyase</keyword>
<keyword id="KW-0663">Pyridoxal phosphate</keyword>
<keyword id="KW-0822">Tryptophan biosynthesis</keyword>
<sequence>MVSTFSRQDQNYKNDDLNQPSKEGRFGKYGGQYVPETLMPALFELETAASNAWKDKLFVKELNHLLKTYVGRETPLYEAKRLTEHYKTKHATTRIWLKREDLNHTGAHKINNALGQALLAIRMGKKRIIAETGAGQHGVATATVCARFGMKCIIYMGAEDIKRQSLNVFRMKLLGAEVKVVNSGTATLKDATSEAIRDWVSNVETTHYILGSVAGPHPFPKIVRDFHAVIGEETKKQCQESFGSLPDILLACVGGGSNAMGLFHPFIKETSVRLIGVEAAGSGVDTDKHAATITKGSVGILHGSMSLLLQDDNGQVQEAHSISAGLDYPGVGPEHSHLKDIGRAEYGSVTDQEALDALRLVSELEGIIPALETSHAFAWLDKLCPTLEKDTHIVINCSGRGDKDVNTVASSLDI</sequence>
<protein>
    <recommendedName>
        <fullName evidence="1">Tryptophan synthase beta chain</fullName>
        <ecNumber evidence="1">4.2.1.20</ecNumber>
    </recommendedName>
</protein>
<reference key="1">
    <citation type="journal article" date="2006" name="Science">
        <title>Genomic islands and the ecology and evolution of Prochlorococcus.</title>
        <authorList>
            <person name="Coleman M.L."/>
            <person name="Sullivan M.B."/>
            <person name="Martiny A.C."/>
            <person name="Steglich C."/>
            <person name="Barry K."/>
            <person name="Delong E.F."/>
            <person name="Chisholm S.W."/>
        </authorList>
    </citation>
    <scope>NUCLEOTIDE SEQUENCE [LARGE SCALE GENOMIC DNA]</scope>
    <source>
        <strain>MIT 9312</strain>
    </source>
</reference>
<proteinExistence type="inferred from homology"/>
<feature type="chain" id="PRO_1000018371" description="Tryptophan synthase beta chain">
    <location>
        <begin position="1"/>
        <end position="414"/>
    </location>
</feature>
<feature type="region of interest" description="Disordered" evidence="2">
    <location>
        <begin position="1"/>
        <end position="26"/>
    </location>
</feature>
<feature type="compositionally biased region" description="Basic and acidic residues" evidence="2">
    <location>
        <begin position="10"/>
        <end position="26"/>
    </location>
</feature>
<feature type="modified residue" description="N6-(pyridoxal phosphate)lysine" evidence="1">
    <location>
        <position position="109"/>
    </location>
</feature>
<gene>
    <name evidence="1" type="primary">trpB</name>
    <name type="ordered locus">PMT9312_0166</name>
</gene>
<organism>
    <name type="scientific">Prochlorococcus marinus (strain MIT 9312)</name>
    <dbReference type="NCBI Taxonomy" id="74546"/>
    <lineage>
        <taxon>Bacteria</taxon>
        <taxon>Bacillati</taxon>
        <taxon>Cyanobacteriota</taxon>
        <taxon>Cyanophyceae</taxon>
        <taxon>Synechococcales</taxon>
        <taxon>Prochlorococcaceae</taxon>
        <taxon>Prochlorococcus</taxon>
    </lineage>
</organism>
<comment type="function">
    <text evidence="1">The beta subunit is responsible for the synthesis of L-tryptophan from indole and L-serine.</text>
</comment>
<comment type="catalytic activity">
    <reaction evidence="1">
        <text>(1S,2R)-1-C-(indol-3-yl)glycerol 3-phosphate + L-serine = D-glyceraldehyde 3-phosphate + L-tryptophan + H2O</text>
        <dbReference type="Rhea" id="RHEA:10532"/>
        <dbReference type="ChEBI" id="CHEBI:15377"/>
        <dbReference type="ChEBI" id="CHEBI:33384"/>
        <dbReference type="ChEBI" id="CHEBI:57912"/>
        <dbReference type="ChEBI" id="CHEBI:58866"/>
        <dbReference type="ChEBI" id="CHEBI:59776"/>
        <dbReference type="EC" id="4.2.1.20"/>
    </reaction>
</comment>
<comment type="cofactor">
    <cofactor evidence="1">
        <name>pyridoxal 5'-phosphate</name>
        <dbReference type="ChEBI" id="CHEBI:597326"/>
    </cofactor>
</comment>
<comment type="pathway">
    <text evidence="1">Amino-acid biosynthesis; L-tryptophan biosynthesis; L-tryptophan from chorismate: step 5/5.</text>
</comment>
<comment type="subunit">
    <text evidence="1">Tetramer of two alpha and two beta chains.</text>
</comment>
<comment type="similarity">
    <text evidence="1">Belongs to the TrpB family.</text>
</comment>
<name>TRPB_PROM9</name>
<dbReference type="EC" id="4.2.1.20" evidence="1"/>
<dbReference type="EMBL" id="CP000111">
    <property type="protein sequence ID" value="ABB49228.1"/>
    <property type="molecule type" value="Genomic_DNA"/>
</dbReference>
<dbReference type="RefSeq" id="WP_011375732.1">
    <property type="nucleotide sequence ID" value="NC_007577.1"/>
</dbReference>
<dbReference type="SMR" id="Q31D17"/>
<dbReference type="STRING" id="74546.PMT9312_0166"/>
<dbReference type="KEGG" id="pmi:PMT9312_0166"/>
<dbReference type="eggNOG" id="COG0133">
    <property type="taxonomic scope" value="Bacteria"/>
</dbReference>
<dbReference type="HOGENOM" id="CLU_016734_3_1_3"/>
<dbReference type="OrthoDB" id="9766131at2"/>
<dbReference type="UniPathway" id="UPA00035">
    <property type="reaction ID" value="UER00044"/>
</dbReference>
<dbReference type="Proteomes" id="UP000002715">
    <property type="component" value="Chromosome"/>
</dbReference>
<dbReference type="GO" id="GO:0005737">
    <property type="term" value="C:cytoplasm"/>
    <property type="evidence" value="ECO:0007669"/>
    <property type="project" value="TreeGrafter"/>
</dbReference>
<dbReference type="GO" id="GO:0004834">
    <property type="term" value="F:tryptophan synthase activity"/>
    <property type="evidence" value="ECO:0007669"/>
    <property type="project" value="UniProtKB-UniRule"/>
</dbReference>
<dbReference type="CDD" id="cd06446">
    <property type="entry name" value="Trp-synth_B"/>
    <property type="match status" value="1"/>
</dbReference>
<dbReference type="FunFam" id="3.40.50.1100:FF:000001">
    <property type="entry name" value="Tryptophan synthase beta chain"/>
    <property type="match status" value="1"/>
</dbReference>
<dbReference type="FunFam" id="3.40.50.1100:FF:000004">
    <property type="entry name" value="Tryptophan synthase beta chain"/>
    <property type="match status" value="1"/>
</dbReference>
<dbReference type="Gene3D" id="3.40.50.1100">
    <property type="match status" value="2"/>
</dbReference>
<dbReference type="HAMAP" id="MF_00133">
    <property type="entry name" value="Trp_synth_beta"/>
    <property type="match status" value="1"/>
</dbReference>
<dbReference type="InterPro" id="IPR006653">
    <property type="entry name" value="Trp_synth_b_CS"/>
</dbReference>
<dbReference type="InterPro" id="IPR006654">
    <property type="entry name" value="Trp_synth_beta"/>
</dbReference>
<dbReference type="InterPro" id="IPR023026">
    <property type="entry name" value="Trp_synth_beta/beta-like"/>
</dbReference>
<dbReference type="InterPro" id="IPR001926">
    <property type="entry name" value="TrpB-like_PALP"/>
</dbReference>
<dbReference type="InterPro" id="IPR036052">
    <property type="entry name" value="TrpB-like_PALP_sf"/>
</dbReference>
<dbReference type="NCBIfam" id="TIGR00263">
    <property type="entry name" value="trpB"/>
    <property type="match status" value="1"/>
</dbReference>
<dbReference type="PANTHER" id="PTHR48077:SF3">
    <property type="entry name" value="TRYPTOPHAN SYNTHASE"/>
    <property type="match status" value="1"/>
</dbReference>
<dbReference type="PANTHER" id="PTHR48077">
    <property type="entry name" value="TRYPTOPHAN SYNTHASE-RELATED"/>
    <property type="match status" value="1"/>
</dbReference>
<dbReference type="Pfam" id="PF00291">
    <property type="entry name" value="PALP"/>
    <property type="match status" value="1"/>
</dbReference>
<dbReference type="PIRSF" id="PIRSF001413">
    <property type="entry name" value="Trp_syn_beta"/>
    <property type="match status" value="1"/>
</dbReference>
<dbReference type="SUPFAM" id="SSF53686">
    <property type="entry name" value="Tryptophan synthase beta subunit-like PLP-dependent enzymes"/>
    <property type="match status" value="1"/>
</dbReference>
<dbReference type="PROSITE" id="PS00168">
    <property type="entry name" value="TRP_SYNTHASE_BETA"/>
    <property type="match status" value="1"/>
</dbReference>
<evidence type="ECO:0000255" key="1">
    <source>
        <dbReference type="HAMAP-Rule" id="MF_00133"/>
    </source>
</evidence>
<evidence type="ECO:0000256" key="2">
    <source>
        <dbReference type="SAM" id="MobiDB-lite"/>
    </source>
</evidence>
<accession>Q31D17</accession>